<protein>
    <recommendedName>
        <fullName evidence="6">Diamine acetyltransferase 1</fullName>
        <ecNumber evidence="4">2.3.1.57</ecNumber>
    </recommendedName>
    <alternativeName>
        <fullName>Polyamine N-acetyltransferase 1</fullName>
    </alternativeName>
    <alternativeName>
        <fullName>Putrescine acetyltransferase</fullName>
    </alternativeName>
    <alternativeName>
        <fullName evidence="5">Spermidine/spermine N(1)-acetyltransferase 1</fullName>
        <shortName evidence="5">SSAT</shortName>
        <shortName>SSAT-1</shortName>
    </alternativeName>
</protein>
<sequence>MAKFKIRPATASDCSDILRLIKELAKYEYMEDQVILTEKDLQEDGFGEHPFYHCLVAEVPKEHWTPEGHSIVGFAMYYFTYDPWIGKLLYLEDFFVMSDYRGFGIGSEILKNLSQVAMKCRCSSMHFLVAEWNEPSINFYKRRGASDLSSEEGWRLFKIDKEYLLKMAAEE</sequence>
<evidence type="ECO:0000250" key="1">
    <source>
        <dbReference type="UniProtKB" id="P0A951"/>
    </source>
</evidence>
<evidence type="ECO:0000250" key="2">
    <source>
        <dbReference type="UniProtKB" id="P21673"/>
    </source>
</evidence>
<evidence type="ECO:0000255" key="3">
    <source>
        <dbReference type="PROSITE-ProRule" id="PRU00532"/>
    </source>
</evidence>
<evidence type="ECO:0000269" key="4">
    <source>
    </source>
</evidence>
<evidence type="ECO:0000303" key="5">
    <source>
    </source>
</evidence>
<evidence type="ECO:0000305" key="6"/>
<evidence type="ECO:0000305" key="7">
    <source>
    </source>
</evidence>
<evidence type="ECO:0000312" key="8">
    <source>
        <dbReference type="MGI" id="MGI:98233"/>
    </source>
</evidence>
<evidence type="ECO:0007829" key="9">
    <source>
        <dbReference type="PDB" id="3BJ7"/>
    </source>
</evidence>
<accession>P48026</accession>
<accession>Q3U444</accession>
<gene>
    <name evidence="8" type="primary">Sat1</name>
    <name type="synonym">Sat</name>
</gene>
<dbReference type="EC" id="2.3.1.57" evidence="4"/>
<dbReference type="EMBL" id="L10244">
    <property type="protein sequence ID" value="AAA16566.1"/>
    <property type="molecule type" value="mRNA"/>
</dbReference>
<dbReference type="EMBL" id="AK002531">
    <property type="protein sequence ID" value="BAB22167.1"/>
    <property type="molecule type" value="mRNA"/>
</dbReference>
<dbReference type="EMBL" id="AK154445">
    <property type="protein sequence ID" value="BAE32591.1"/>
    <property type="molecule type" value="mRNA"/>
</dbReference>
<dbReference type="EMBL" id="BC058696">
    <property type="protein sequence ID" value="AAH58696.1"/>
    <property type="molecule type" value="mRNA"/>
</dbReference>
<dbReference type="CCDS" id="CCDS30495.1"/>
<dbReference type="PIR" id="S43429">
    <property type="entry name" value="S43429"/>
</dbReference>
<dbReference type="RefSeq" id="NP_001278794.1">
    <property type="nucleotide sequence ID" value="NM_001291865.1"/>
</dbReference>
<dbReference type="RefSeq" id="NP_033147.1">
    <property type="nucleotide sequence ID" value="NM_009121.5"/>
</dbReference>
<dbReference type="PDB" id="3BJ7">
    <property type="method" value="X-ray"/>
    <property type="resolution" value="2.20 A"/>
    <property type="chains" value="A/B/C/D=1-171"/>
</dbReference>
<dbReference type="PDB" id="3BJ8">
    <property type="method" value="X-ray"/>
    <property type="resolution" value="2.30 A"/>
    <property type="chains" value="A/B/C/D=1-171"/>
</dbReference>
<dbReference type="PDBsum" id="3BJ7"/>
<dbReference type="PDBsum" id="3BJ8"/>
<dbReference type="SMR" id="P48026"/>
<dbReference type="BioGRID" id="203076">
    <property type="interactions" value="2"/>
</dbReference>
<dbReference type="DIP" id="DIP-46096N"/>
<dbReference type="FunCoup" id="P48026">
    <property type="interactions" value="826"/>
</dbReference>
<dbReference type="IntAct" id="P48026">
    <property type="interactions" value="1"/>
</dbReference>
<dbReference type="STRING" id="10090.ENSMUSP00000026318"/>
<dbReference type="ChEMBL" id="CHEMBL4775"/>
<dbReference type="iPTMnet" id="P48026"/>
<dbReference type="PhosphoSitePlus" id="P48026"/>
<dbReference type="PaxDb" id="10090-ENSMUSP00000026318"/>
<dbReference type="ProteomicsDB" id="256705"/>
<dbReference type="Antibodypedia" id="24525">
    <property type="antibodies" value="238 antibodies from 22 providers"/>
</dbReference>
<dbReference type="DNASU" id="20229"/>
<dbReference type="Ensembl" id="ENSMUST00000026318.15">
    <property type="protein sequence ID" value="ENSMUSP00000026318.9"/>
    <property type="gene ID" value="ENSMUSG00000025283.16"/>
</dbReference>
<dbReference type="GeneID" id="20229"/>
<dbReference type="KEGG" id="mmu:20229"/>
<dbReference type="UCSC" id="uc009urq.2">
    <property type="organism name" value="mouse"/>
</dbReference>
<dbReference type="AGR" id="MGI:98233"/>
<dbReference type="CTD" id="6303"/>
<dbReference type="MGI" id="MGI:98233">
    <property type="gene designation" value="Sat1"/>
</dbReference>
<dbReference type="VEuPathDB" id="HostDB:ENSMUSG00000025283"/>
<dbReference type="eggNOG" id="KOG3216">
    <property type="taxonomic scope" value="Eukaryota"/>
</dbReference>
<dbReference type="GeneTree" id="ENSGT00950000183121"/>
<dbReference type="HOGENOM" id="CLU_013985_41_1_1"/>
<dbReference type="InParanoid" id="P48026"/>
<dbReference type="OMA" id="IAVKCRC"/>
<dbReference type="OrthoDB" id="3368at9989"/>
<dbReference type="PhylomeDB" id="P48026"/>
<dbReference type="TreeFam" id="TF319736"/>
<dbReference type="BRENDA" id="2.3.1.57">
    <property type="organism ID" value="3474"/>
</dbReference>
<dbReference type="Reactome" id="R-MMU-351200">
    <property type="pathway name" value="Interconversion of polyamines"/>
</dbReference>
<dbReference type="SABIO-RK" id="P48026"/>
<dbReference type="UniPathway" id="UPA00188">
    <property type="reaction ID" value="UER00363"/>
</dbReference>
<dbReference type="BioGRID-ORCS" id="20229">
    <property type="hits" value="1 hit in 81 CRISPR screens"/>
</dbReference>
<dbReference type="ChiTaRS" id="Sat1">
    <property type="organism name" value="mouse"/>
</dbReference>
<dbReference type="EvolutionaryTrace" id="P48026"/>
<dbReference type="PRO" id="PR:P48026"/>
<dbReference type="Proteomes" id="UP000000589">
    <property type="component" value="Chromosome X"/>
</dbReference>
<dbReference type="RNAct" id="P48026">
    <property type="molecule type" value="protein"/>
</dbReference>
<dbReference type="Bgee" id="ENSMUSG00000025283">
    <property type="expression patterns" value="Expressed in granulocyte and 122 other cell types or tissues"/>
</dbReference>
<dbReference type="ExpressionAtlas" id="P48026">
    <property type="expression patterns" value="baseline and differential"/>
</dbReference>
<dbReference type="GO" id="GO:0005829">
    <property type="term" value="C:cytosol"/>
    <property type="evidence" value="ECO:0007669"/>
    <property type="project" value="UniProtKB-SubCell"/>
</dbReference>
<dbReference type="GO" id="GO:0004145">
    <property type="term" value="F:diamine N-acetyltransferase activity"/>
    <property type="evidence" value="ECO:0000250"/>
    <property type="project" value="UniProtKB"/>
</dbReference>
<dbReference type="GO" id="GO:0042802">
    <property type="term" value="F:identical protein binding"/>
    <property type="evidence" value="ECO:0007669"/>
    <property type="project" value="Ensembl"/>
</dbReference>
<dbReference type="GO" id="GO:0008080">
    <property type="term" value="F:N-acetyltransferase activity"/>
    <property type="evidence" value="ECO:0000250"/>
    <property type="project" value="UniProtKB"/>
</dbReference>
<dbReference type="GO" id="GO:0019809">
    <property type="term" value="F:spermidine binding"/>
    <property type="evidence" value="ECO:0007669"/>
    <property type="project" value="Ensembl"/>
</dbReference>
<dbReference type="GO" id="GO:0001525">
    <property type="term" value="P:angiogenesis"/>
    <property type="evidence" value="ECO:0007669"/>
    <property type="project" value="Ensembl"/>
</dbReference>
<dbReference type="GO" id="GO:0006596">
    <property type="term" value="P:polyamine biosynthetic process"/>
    <property type="evidence" value="ECO:0000250"/>
    <property type="project" value="UniProtKB"/>
</dbReference>
<dbReference type="GO" id="GO:0009447">
    <property type="term" value="P:putrescine catabolic process"/>
    <property type="evidence" value="ECO:0007669"/>
    <property type="project" value="UniProtKB-UniPathway"/>
</dbReference>
<dbReference type="GO" id="GO:0042127">
    <property type="term" value="P:regulation of cell population proliferation"/>
    <property type="evidence" value="ECO:0000316"/>
    <property type="project" value="MGI"/>
</dbReference>
<dbReference type="GO" id="GO:0032918">
    <property type="term" value="P:spermidine acetylation"/>
    <property type="evidence" value="ECO:0000250"/>
    <property type="project" value="UniProtKB"/>
</dbReference>
<dbReference type="GO" id="GO:0046208">
    <property type="term" value="P:spermine catabolic process"/>
    <property type="evidence" value="ECO:0000304"/>
    <property type="project" value="MGI"/>
</dbReference>
<dbReference type="CDD" id="cd04301">
    <property type="entry name" value="NAT_SF"/>
    <property type="match status" value="1"/>
</dbReference>
<dbReference type="FunFam" id="3.40.630.30:FF:000011">
    <property type="entry name" value="Diamine acetyltransferase 1"/>
    <property type="match status" value="1"/>
</dbReference>
<dbReference type="Gene3D" id="3.40.630.30">
    <property type="match status" value="1"/>
</dbReference>
<dbReference type="InterPro" id="IPR016181">
    <property type="entry name" value="Acyl_CoA_acyltransferase"/>
</dbReference>
<dbReference type="InterPro" id="IPR051016">
    <property type="entry name" value="Diverse_Substrate_AcTransf"/>
</dbReference>
<dbReference type="InterPro" id="IPR000182">
    <property type="entry name" value="GNAT_dom"/>
</dbReference>
<dbReference type="PANTHER" id="PTHR10545:SF36">
    <property type="entry name" value="DIAMINE ACETYLTRANSFERASE 1"/>
    <property type="match status" value="1"/>
</dbReference>
<dbReference type="PANTHER" id="PTHR10545">
    <property type="entry name" value="DIAMINE N-ACETYLTRANSFERASE"/>
    <property type="match status" value="1"/>
</dbReference>
<dbReference type="Pfam" id="PF00583">
    <property type="entry name" value="Acetyltransf_1"/>
    <property type="match status" value="1"/>
</dbReference>
<dbReference type="SUPFAM" id="SSF55729">
    <property type="entry name" value="Acyl-CoA N-acyltransferases (Nat)"/>
    <property type="match status" value="1"/>
</dbReference>
<dbReference type="PROSITE" id="PS51186">
    <property type="entry name" value="GNAT"/>
    <property type="match status" value="1"/>
</dbReference>
<feature type="chain" id="PRO_0000074593" description="Diamine acetyltransferase 1">
    <location>
        <begin position="1"/>
        <end position="171"/>
    </location>
</feature>
<feature type="domain" description="N-acetyltransferase" evidence="3">
    <location>
        <begin position="4"/>
        <end position="170"/>
    </location>
</feature>
<feature type="active site" description="Proton donor" evidence="1">
    <location>
        <position position="140"/>
    </location>
</feature>
<feature type="binding site" evidence="2">
    <location>
        <begin position="27"/>
        <end position="28"/>
    </location>
    <ligand>
        <name>substrate</name>
    </ligand>
</feature>
<feature type="binding site" evidence="7">
    <location>
        <position position="92"/>
    </location>
    <ligand>
        <name>substrate</name>
    </ligand>
</feature>
<feature type="binding site" evidence="7">
    <location>
        <begin position="94"/>
        <end position="96"/>
    </location>
    <ligand>
        <name>acetyl-CoA</name>
        <dbReference type="ChEBI" id="CHEBI:57288"/>
    </ligand>
</feature>
<feature type="binding site" evidence="7">
    <location>
        <begin position="102"/>
        <end position="107"/>
    </location>
    <ligand>
        <name>acetyl-CoA</name>
        <dbReference type="ChEBI" id="CHEBI:57288"/>
    </ligand>
</feature>
<feature type="binding site" evidence="7">
    <location>
        <begin position="126"/>
        <end position="128"/>
    </location>
    <ligand>
        <name>substrate</name>
    </ligand>
</feature>
<feature type="binding site" evidence="7">
    <location>
        <begin position="133"/>
        <end position="136"/>
    </location>
    <ligand>
        <name>acetyl-CoA</name>
        <dbReference type="ChEBI" id="CHEBI:57288"/>
    </ligand>
</feature>
<feature type="binding site" evidence="7">
    <location>
        <begin position="140"/>
        <end position="143"/>
    </location>
    <ligand>
        <name>acetyl-CoA</name>
        <dbReference type="ChEBI" id="CHEBI:57288"/>
    </ligand>
</feature>
<feature type="binding site" evidence="2">
    <location>
        <position position="152"/>
    </location>
    <ligand>
        <name>substrate</name>
    </ligand>
</feature>
<feature type="mutagenesis site" description="Reduced activity." evidence="4">
    <original>E</original>
    <variation>Q</variation>
    <location>
        <position position="92"/>
    </location>
</feature>
<feature type="mutagenesis site" description="Reduced activity." evidence="4">
    <original>D</original>
    <variation>N</variation>
    <location>
        <position position="93"/>
    </location>
</feature>
<feature type="strand" evidence="9">
    <location>
        <begin position="5"/>
        <end position="8"/>
    </location>
</feature>
<feature type="helix" evidence="9">
    <location>
        <begin position="11"/>
        <end position="13"/>
    </location>
</feature>
<feature type="helix" evidence="9">
    <location>
        <begin position="14"/>
        <end position="27"/>
    </location>
</feature>
<feature type="helix" evidence="9">
    <location>
        <begin position="31"/>
        <end position="33"/>
    </location>
</feature>
<feature type="helix" evidence="9">
    <location>
        <begin position="38"/>
        <end position="46"/>
    </location>
</feature>
<feature type="strand" evidence="9">
    <location>
        <begin position="47"/>
        <end position="49"/>
    </location>
</feature>
<feature type="strand" evidence="9">
    <location>
        <begin position="53"/>
        <end position="58"/>
    </location>
</feature>
<feature type="helix" evidence="9">
    <location>
        <begin position="61"/>
        <end position="63"/>
    </location>
</feature>
<feature type="strand" evidence="9">
    <location>
        <begin position="70"/>
        <end position="82"/>
    </location>
</feature>
<feature type="turn" evidence="9">
    <location>
        <begin position="83"/>
        <end position="85"/>
    </location>
</feature>
<feature type="strand" evidence="9">
    <location>
        <begin position="86"/>
        <end position="96"/>
    </location>
</feature>
<feature type="helix" evidence="9">
    <location>
        <begin position="98"/>
        <end position="100"/>
    </location>
</feature>
<feature type="helix" evidence="9">
    <location>
        <begin position="105"/>
        <end position="119"/>
    </location>
</feature>
<feature type="strand" evidence="9">
    <location>
        <begin position="123"/>
        <end position="129"/>
    </location>
</feature>
<feature type="helix" evidence="9">
    <location>
        <begin position="134"/>
        <end position="141"/>
    </location>
</feature>
<feature type="turn" evidence="9">
    <location>
        <begin position="142"/>
        <end position="144"/>
    </location>
</feature>
<feature type="helix" evidence="9">
    <location>
        <begin position="149"/>
        <end position="151"/>
    </location>
</feature>
<feature type="strand" evidence="9">
    <location>
        <begin position="157"/>
        <end position="160"/>
    </location>
</feature>
<feature type="helix" evidence="9">
    <location>
        <begin position="161"/>
        <end position="168"/>
    </location>
</feature>
<name>SAT1_MOUSE</name>
<keyword id="KW-0002">3D-structure</keyword>
<keyword id="KW-0012">Acyltransferase</keyword>
<keyword id="KW-0963">Cytoplasm</keyword>
<keyword id="KW-0903">Direct protein sequencing</keyword>
<keyword id="KW-1185">Reference proteome</keyword>
<keyword id="KW-0808">Transferase</keyword>
<comment type="function">
    <text evidence="2 7">Enzyme which catalyzes the acetylation of polyamines (PubMed:18690703). Substrate specificity: norspermidine = spermidine &gt;&gt; spermine &gt; N(1)-acetylspermine (By similarity). This highly regulated enzyme allows a fine attenuation of the intracellular concentration of polyamines (By similarity). Also involved in the regulation of polyamine transport out of cells (By similarity). Also acts on 1,3-diaminopropane and 1,5-diaminopentane (By similarity).</text>
</comment>
<comment type="catalytic activity">
    <reaction evidence="4">
        <text>an alkane-alpha,omega-diamine + acetyl-CoA = an N-acetylalkane-alpha,omega-diamine + CoA + H(+)</text>
        <dbReference type="Rhea" id="RHEA:11116"/>
        <dbReference type="Rhea" id="RHEA-COMP:9766"/>
        <dbReference type="Rhea" id="RHEA-COMP:9767"/>
        <dbReference type="ChEBI" id="CHEBI:15378"/>
        <dbReference type="ChEBI" id="CHEBI:57287"/>
        <dbReference type="ChEBI" id="CHEBI:57288"/>
        <dbReference type="ChEBI" id="CHEBI:70977"/>
        <dbReference type="ChEBI" id="CHEBI:70988"/>
        <dbReference type="EC" id="2.3.1.57"/>
    </reaction>
    <physiologicalReaction direction="left-to-right" evidence="4">
        <dbReference type="Rhea" id="RHEA:11117"/>
    </physiologicalReaction>
</comment>
<comment type="catalytic activity">
    <reaction evidence="4">
        <text>spermidine + acetyl-CoA = N(1)-acetylspermidine + CoA + H(+)</text>
        <dbReference type="Rhea" id="RHEA:28150"/>
        <dbReference type="ChEBI" id="CHEBI:15378"/>
        <dbReference type="ChEBI" id="CHEBI:57287"/>
        <dbReference type="ChEBI" id="CHEBI:57288"/>
        <dbReference type="ChEBI" id="CHEBI:57834"/>
        <dbReference type="ChEBI" id="CHEBI:58324"/>
        <dbReference type="EC" id="2.3.1.57"/>
    </reaction>
    <physiologicalReaction direction="left-to-right" evidence="4">
        <dbReference type="Rhea" id="RHEA:28151"/>
    </physiologicalReaction>
</comment>
<comment type="catalytic activity">
    <reaction evidence="2">
        <text>spermine + acetyl-CoA = N(1)-acetylspermine + CoA + H(+)</text>
        <dbReference type="Rhea" id="RHEA:33099"/>
        <dbReference type="ChEBI" id="CHEBI:15378"/>
        <dbReference type="ChEBI" id="CHEBI:45725"/>
        <dbReference type="ChEBI" id="CHEBI:57287"/>
        <dbReference type="ChEBI" id="CHEBI:57288"/>
        <dbReference type="ChEBI" id="CHEBI:58101"/>
        <dbReference type="EC" id="2.3.1.57"/>
    </reaction>
    <physiologicalReaction direction="left-to-right" evidence="2">
        <dbReference type="Rhea" id="RHEA:33100"/>
    </physiologicalReaction>
</comment>
<comment type="biophysicochemical properties">
    <phDependence>
        <text evidence="4">Optimum pH is 8.5-9.5.</text>
    </phDependence>
</comment>
<comment type="pathway">
    <text evidence="7">Amine and polyamine degradation; putrescine degradation; N-acetylputrescine from putrescine: step 1/1.</text>
</comment>
<comment type="subunit">
    <text evidence="4">Homodimer.</text>
</comment>
<comment type="subcellular location">
    <subcellularLocation>
        <location evidence="2">Cytoplasm</location>
        <location evidence="2">Cytosol</location>
    </subcellularLocation>
</comment>
<comment type="similarity">
    <text evidence="6">Belongs to the acetyltransferase family.</text>
</comment>
<reference key="1">
    <citation type="journal article" date="1993" name="Biochim. Biophys. Acta">
        <title>Cloning and sequence analysis of the gene and cDNA encoding mouse spermidine/spermine N1-acetyltransferase -- a gene uniquely regulated by polyamines and their analogs.</title>
        <authorList>
            <person name="Fogel-Petrovic M."/>
            <person name="Kramer D.L."/>
            <person name="Ganis B."/>
            <person name="Casero R.A. Jr."/>
            <person name="Porter C.W."/>
        </authorList>
    </citation>
    <scope>NUCLEOTIDE SEQUENCE [MRNA]</scope>
    <source>
        <strain>BALB/cJ</strain>
        <tissue>Liver</tissue>
    </source>
</reference>
<reference key="2">
    <citation type="journal article" date="2005" name="Science">
        <title>The transcriptional landscape of the mammalian genome.</title>
        <authorList>
            <person name="Carninci P."/>
            <person name="Kasukawa T."/>
            <person name="Katayama S."/>
            <person name="Gough J."/>
            <person name="Frith M.C."/>
            <person name="Maeda N."/>
            <person name="Oyama R."/>
            <person name="Ravasi T."/>
            <person name="Lenhard B."/>
            <person name="Wells C."/>
            <person name="Kodzius R."/>
            <person name="Shimokawa K."/>
            <person name="Bajic V.B."/>
            <person name="Brenner S.E."/>
            <person name="Batalov S."/>
            <person name="Forrest A.R."/>
            <person name="Zavolan M."/>
            <person name="Davis M.J."/>
            <person name="Wilming L.G."/>
            <person name="Aidinis V."/>
            <person name="Allen J.E."/>
            <person name="Ambesi-Impiombato A."/>
            <person name="Apweiler R."/>
            <person name="Aturaliya R.N."/>
            <person name="Bailey T.L."/>
            <person name="Bansal M."/>
            <person name="Baxter L."/>
            <person name="Beisel K.W."/>
            <person name="Bersano T."/>
            <person name="Bono H."/>
            <person name="Chalk A.M."/>
            <person name="Chiu K.P."/>
            <person name="Choudhary V."/>
            <person name="Christoffels A."/>
            <person name="Clutterbuck D.R."/>
            <person name="Crowe M.L."/>
            <person name="Dalla E."/>
            <person name="Dalrymple B.P."/>
            <person name="de Bono B."/>
            <person name="Della Gatta G."/>
            <person name="di Bernardo D."/>
            <person name="Down T."/>
            <person name="Engstrom P."/>
            <person name="Fagiolini M."/>
            <person name="Faulkner G."/>
            <person name="Fletcher C.F."/>
            <person name="Fukushima T."/>
            <person name="Furuno M."/>
            <person name="Futaki S."/>
            <person name="Gariboldi M."/>
            <person name="Georgii-Hemming P."/>
            <person name="Gingeras T.R."/>
            <person name="Gojobori T."/>
            <person name="Green R.E."/>
            <person name="Gustincich S."/>
            <person name="Harbers M."/>
            <person name="Hayashi Y."/>
            <person name="Hensch T.K."/>
            <person name="Hirokawa N."/>
            <person name="Hill D."/>
            <person name="Huminiecki L."/>
            <person name="Iacono M."/>
            <person name="Ikeo K."/>
            <person name="Iwama A."/>
            <person name="Ishikawa T."/>
            <person name="Jakt M."/>
            <person name="Kanapin A."/>
            <person name="Katoh M."/>
            <person name="Kawasawa Y."/>
            <person name="Kelso J."/>
            <person name="Kitamura H."/>
            <person name="Kitano H."/>
            <person name="Kollias G."/>
            <person name="Krishnan S.P."/>
            <person name="Kruger A."/>
            <person name="Kummerfeld S.K."/>
            <person name="Kurochkin I.V."/>
            <person name="Lareau L.F."/>
            <person name="Lazarevic D."/>
            <person name="Lipovich L."/>
            <person name="Liu J."/>
            <person name="Liuni S."/>
            <person name="McWilliam S."/>
            <person name="Madan Babu M."/>
            <person name="Madera M."/>
            <person name="Marchionni L."/>
            <person name="Matsuda H."/>
            <person name="Matsuzawa S."/>
            <person name="Miki H."/>
            <person name="Mignone F."/>
            <person name="Miyake S."/>
            <person name="Morris K."/>
            <person name="Mottagui-Tabar S."/>
            <person name="Mulder N."/>
            <person name="Nakano N."/>
            <person name="Nakauchi H."/>
            <person name="Ng P."/>
            <person name="Nilsson R."/>
            <person name="Nishiguchi S."/>
            <person name="Nishikawa S."/>
            <person name="Nori F."/>
            <person name="Ohara O."/>
            <person name="Okazaki Y."/>
            <person name="Orlando V."/>
            <person name="Pang K.C."/>
            <person name="Pavan W.J."/>
            <person name="Pavesi G."/>
            <person name="Pesole G."/>
            <person name="Petrovsky N."/>
            <person name="Piazza S."/>
            <person name="Reed J."/>
            <person name="Reid J.F."/>
            <person name="Ring B.Z."/>
            <person name="Ringwald M."/>
            <person name="Rost B."/>
            <person name="Ruan Y."/>
            <person name="Salzberg S.L."/>
            <person name="Sandelin A."/>
            <person name="Schneider C."/>
            <person name="Schoenbach C."/>
            <person name="Sekiguchi K."/>
            <person name="Semple C.A."/>
            <person name="Seno S."/>
            <person name="Sessa L."/>
            <person name="Sheng Y."/>
            <person name="Shibata Y."/>
            <person name="Shimada H."/>
            <person name="Shimada K."/>
            <person name="Silva D."/>
            <person name="Sinclair B."/>
            <person name="Sperling S."/>
            <person name="Stupka E."/>
            <person name="Sugiura K."/>
            <person name="Sultana R."/>
            <person name="Takenaka Y."/>
            <person name="Taki K."/>
            <person name="Tammoja K."/>
            <person name="Tan S.L."/>
            <person name="Tang S."/>
            <person name="Taylor M.S."/>
            <person name="Tegner J."/>
            <person name="Teichmann S.A."/>
            <person name="Ueda H.R."/>
            <person name="van Nimwegen E."/>
            <person name="Verardo R."/>
            <person name="Wei C.L."/>
            <person name="Yagi K."/>
            <person name="Yamanishi H."/>
            <person name="Zabarovsky E."/>
            <person name="Zhu S."/>
            <person name="Zimmer A."/>
            <person name="Hide W."/>
            <person name="Bult C."/>
            <person name="Grimmond S.M."/>
            <person name="Teasdale R.D."/>
            <person name="Liu E.T."/>
            <person name="Brusic V."/>
            <person name="Quackenbush J."/>
            <person name="Wahlestedt C."/>
            <person name="Mattick J.S."/>
            <person name="Hume D.A."/>
            <person name="Kai C."/>
            <person name="Sasaki D."/>
            <person name="Tomaru Y."/>
            <person name="Fukuda S."/>
            <person name="Kanamori-Katayama M."/>
            <person name="Suzuki M."/>
            <person name="Aoki J."/>
            <person name="Arakawa T."/>
            <person name="Iida J."/>
            <person name="Imamura K."/>
            <person name="Itoh M."/>
            <person name="Kato T."/>
            <person name="Kawaji H."/>
            <person name="Kawagashira N."/>
            <person name="Kawashima T."/>
            <person name="Kojima M."/>
            <person name="Kondo S."/>
            <person name="Konno H."/>
            <person name="Nakano K."/>
            <person name="Ninomiya N."/>
            <person name="Nishio T."/>
            <person name="Okada M."/>
            <person name="Plessy C."/>
            <person name="Shibata K."/>
            <person name="Shiraki T."/>
            <person name="Suzuki S."/>
            <person name="Tagami M."/>
            <person name="Waki K."/>
            <person name="Watahiki A."/>
            <person name="Okamura-Oho Y."/>
            <person name="Suzuki H."/>
            <person name="Kawai J."/>
            <person name="Hayashizaki Y."/>
        </authorList>
    </citation>
    <scope>NUCLEOTIDE SEQUENCE [LARGE SCALE MRNA]</scope>
    <source>
        <strain>C57BL/6J</strain>
        <strain>NOD</strain>
        <tissue>Kidney</tissue>
    </source>
</reference>
<reference key="3">
    <citation type="journal article" date="2004" name="Genome Res.">
        <title>The status, quality, and expansion of the NIH full-length cDNA project: the Mammalian Gene Collection (MGC).</title>
        <authorList>
            <consortium name="The MGC Project Team"/>
        </authorList>
    </citation>
    <scope>NUCLEOTIDE SEQUENCE [LARGE SCALE MRNA]</scope>
    <source>
        <strain>C57BL/6J</strain>
        <tissue>Brain</tissue>
    </source>
</reference>
<reference key="4">
    <citation type="submission" date="2007-04" db="UniProtKB">
        <authorList>
            <person name="Lubec G."/>
            <person name="Kang S.U."/>
        </authorList>
    </citation>
    <scope>PROTEIN SEQUENCE OF 20-26</scope>
    <scope>IDENTIFICATION BY MASS SPECTROMETRY</scope>
    <source>
        <strain>C57BL/6J</strain>
        <tissue>Brain</tissue>
    </source>
</reference>
<reference key="5">
    <citation type="journal article" date="2008" name="Biochemistry">
        <title>The crystal structure of spermidine/spermine N1-acetyltransferase in complex with spermine provides insights into substrate binding and catalysis.</title>
        <authorList>
            <person name="Montemayor E.J."/>
            <person name="Hoffman D.W."/>
        </authorList>
    </citation>
    <scope>X-RAY CRYSTALLOGRAPHY (2.2 ANGSTROMS) IN COMPLEX WITH THE ACETYL-COA ANALOG COENZYME A AND THE SUBSTRATE SPERMINE</scope>
    <scope>MUTAGENESIS OF GLU-92 AND ASP-93</scope>
    <scope>BIOPHYSICOCHEMICAL PROPERTIES</scope>
    <scope>SUBUNIT</scope>
    <scope>CATALYTIC ACTIVITY</scope>
</reference>
<organism>
    <name type="scientific">Mus musculus</name>
    <name type="common">Mouse</name>
    <dbReference type="NCBI Taxonomy" id="10090"/>
    <lineage>
        <taxon>Eukaryota</taxon>
        <taxon>Metazoa</taxon>
        <taxon>Chordata</taxon>
        <taxon>Craniata</taxon>
        <taxon>Vertebrata</taxon>
        <taxon>Euteleostomi</taxon>
        <taxon>Mammalia</taxon>
        <taxon>Eutheria</taxon>
        <taxon>Euarchontoglires</taxon>
        <taxon>Glires</taxon>
        <taxon>Rodentia</taxon>
        <taxon>Myomorpha</taxon>
        <taxon>Muroidea</taxon>
        <taxon>Muridae</taxon>
        <taxon>Murinae</taxon>
        <taxon>Mus</taxon>
        <taxon>Mus</taxon>
    </lineage>
</organism>
<proteinExistence type="evidence at protein level"/>